<proteinExistence type="evidence at transcript level"/>
<keyword id="KW-0238">DNA-binding</keyword>
<keyword id="KW-0371">Homeobox</keyword>
<keyword id="KW-0539">Nucleus</keyword>
<keyword id="KW-1185">Reference proteome</keyword>
<keyword id="KW-0804">Transcription</keyword>
<keyword id="KW-0805">Transcription regulation</keyword>
<evidence type="ECO:0000250" key="1"/>
<evidence type="ECO:0000255" key="2">
    <source>
        <dbReference type="PROSITE-ProRule" id="PRU00108"/>
    </source>
</evidence>
<evidence type="ECO:0000255" key="3">
    <source>
        <dbReference type="PROSITE-ProRule" id="PRU00530"/>
    </source>
</evidence>
<evidence type="ECO:0000305" key="4"/>
<sequence>MMSMNSKQAFSMHPILHEPKYPHLHTSSEAIRRACLPAPQIQGNIFAGFDETLLRGAEALAAVDIVSQKTHPFKPDATYHTMSSVSCTPTSSSVHLHHPSVLTTHHPHHHHHQPAQGLEGELLDHLNSALPLGGVPGPDVGSTPSHPHSHMSAINHMAHHSQPMNMSHPHGLASHAVISGPETETDPRELESFAERFKQRRIKLGVTQADVGSALANLKIPGVGCLSQSTICRFESLTLSHNNMVALKPILEAWLEEAERAQREKMTKPEIYTGGDKKRKRTSIAAPEKRSLEAYFAVQPRPSSEKIAAIAEKLDLKKNVVRVWFCNQRQKQKRMKFSATY</sequence>
<name>BRN3_CHICK</name>
<dbReference type="EMBL" id="X91998">
    <property type="protein sequence ID" value="CAA63049.1"/>
    <property type="molecule type" value="mRNA"/>
</dbReference>
<dbReference type="EMBL" id="X91997">
    <property type="protein sequence ID" value="CAA63048.1"/>
    <property type="molecule type" value="Genomic_DNA"/>
</dbReference>
<dbReference type="RefSeq" id="NP_990090.1">
    <property type="nucleotide sequence ID" value="NM_204759.1"/>
</dbReference>
<dbReference type="SMR" id="Q91998"/>
<dbReference type="FunCoup" id="Q91998">
    <property type="interactions" value="141"/>
</dbReference>
<dbReference type="STRING" id="9031.ENSGALP00000055381"/>
<dbReference type="GlyGen" id="Q91998">
    <property type="glycosylation" value="1 site"/>
</dbReference>
<dbReference type="PaxDb" id="9031-ENSGALP00000041494"/>
<dbReference type="Ensembl" id="ENSGALT00010027165.1">
    <property type="protein sequence ID" value="ENSGALP00010015464.1"/>
    <property type="gene ID" value="ENSGALG00010011358.1"/>
</dbReference>
<dbReference type="GeneID" id="395521"/>
<dbReference type="KEGG" id="gga:395521"/>
<dbReference type="CTD" id="395521"/>
<dbReference type="VEuPathDB" id="HostDB:geneid_395521"/>
<dbReference type="eggNOG" id="KOG1168">
    <property type="taxonomic scope" value="Eukaryota"/>
</dbReference>
<dbReference type="GeneTree" id="ENSGT00940000165106"/>
<dbReference type="HOGENOM" id="CLU_013065_0_0_1"/>
<dbReference type="InParanoid" id="Q91998"/>
<dbReference type="OMA" id="PKYTHLH"/>
<dbReference type="OrthoDB" id="6358449at2759"/>
<dbReference type="PhylomeDB" id="Q91998"/>
<dbReference type="PRO" id="PR:Q91998"/>
<dbReference type="Proteomes" id="UP000000539">
    <property type="component" value="Chromosome 4"/>
</dbReference>
<dbReference type="GO" id="GO:0005634">
    <property type="term" value="C:nucleus"/>
    <property type="evidence" value="ECO:0007669"/>
    <property type="project" value="UniProtKB-SubCell"/>
</dbReference>
<dbReference type="GO" id="GO:0000981">
    <property type="term" value="F:DNA-binding transcription factor activity, RNA polymerase II-specific"/>
    <property type="evidence" value="ECO:0000318"/>
    <property type="project" value="GO_Central"/>
</dbReference>
<dbReference type="GO" id="GO:0000978">
    <property type="term" value="F:RNA polymerase II cis-regulatory region sequence-specific DNA binding"/>
    <property type="evidence" value="ECO:0000318"/>
    <property type="project" value="GO_Central"/>
</dbReference>
<dbReference type="GO" id="GO:0006357">
    <property type="term" value="P:regulation of transcription by RNA polymerase II"/>
    <property type="evidence" value="ECO:0000318"/>
    <property type="project" value="GO_Central"/>
</dbReference>
<dbReference type="CDD" id="cd00086">
    <property type="entry name" value="homeodomain"/>
    <property type="match status" value="1"/>
</dbReference>
<dbReference type="FunFam" id="1.10.10.60:FF:000056">
    <property type="entry name" value="POU domain protein"/>
    <property type="match status" value="1"/>
</dbReference>
<dbReference type="FunFam" id="1.10.260.40:FF:000007">
    <property type="entry name" value="POU domain protein"/>
    <property type="match status" value="1"/>
</dbReference>
<dbReference type="Gene3D" id="1.10.10.60">
    <property type="entry name" value="Homeodomain-like"/>
    <property type="match status" value="1"/>
</dbReference>
<dbReference type="Gene3D" id="1.10.260.40">
    <property type="entry name" value="lambda repressor-like DNA-binding domains"/>
    <property type="match status" value="1"/>
</dbReference>
<dbReference type="InterPro" id="IPR001356">
    <property type="entry name" value="HD"/>
</dbReference>
<dbReference type="InterPro" id="IPR017970">
    <property type="entry name" value="Homeobox_CS"/>
</dbReference>
<dbReference type="InterPro" id="IPR009057">
    <property type="entry name" value="Homeodomain-like_sf"/>
</dbReference>
<dbReference type="InterPro" id="IPR010982">
    <property type="entry name" value="Lambda_DNA-bd_dom_sf"/>
</dbReference>
<dbReference type="InterPro" id="IPR013847">
    <property type="entry name" value="POU"/>
</dbReference>
<dbReference type="InterPro" id="IPR000327">
    <property type="entry name" value="POU_dom"/>
</dbReference>
<dbReference type="InterPro" id="IPR050255">
    <property type="entry name" value="POU_domain_TF"/>
</dbReference>
<dbReference type="PANTHER" id="PTHR11636:SF44">
    <property type="entry name" value="BRAIN-SPECIFIC HOMEOBOX_POU DOMAIN PROTEIN 3"/>
    <property type="match status" value="1"/>
</dbReference>
<dbReference type="PANTHER" id="PTHR11636">
    <property type="entry name" value="POU DOMAIN"/>
    <property type="match status" value="1"/>
</dbReference>
<dbReference type="Pfam" id="PF00046">
    <property type="entry name" value="Homeodomain"/>
    <property type="match status" value="1"/>
</dbReference>
<dbReference type="Pfam" id="PF00157">
    <property type="entry name" value="Pou"/>
    <property type="match status" value="1"/>
</dbReference>
<dbReference type="PRINTS" id="PR00028">
    <property type="entry name" value="POUDOMAIN"/>
</dbReference>
<dbReference type="SMART" id="SM00389">
    <property type="entry name" value="HOX"/>
    <property type="match status" value="1"/>
</dbReference>
<dbReference type="SMART" id="SM00352">
    <property type="entry name" value="POU"/>
    <property type="match status" value="1"/>
</dbReference>
<dbReference type="SUPFAM" id="SSF46689">
    <property type="entry name" value="Homeodomain-like"/>
    <property type="match status" value="1"/>
</dbReference>
<dbReference type="SUPFAM" id="SSF47413">
    <property type="entry name" value="lambda repressor-like DNA-binding domains"/>
    <property type="match status" value="1"/>
</dbReference>
<dbReference type="PROSITE" id="PS00027">
    <property type="entry name" value="HOMEOBOX_1"/>
    <property type="match status" value="1"/>
</dbReference>
<dbReference type="PROSITE" id="PS50071">
    <property type="entry name" value="HOMEOBOX_2"/>
    <property type="match status" value="1"/>
</dbReference>
<dbReference type="PROSITE" id="PS00035">
    <property type="entry name" value="POU_1"/>
    <property type="match status" value="1"/>
</dbReference>
<dbReference type="PROSITE" id="PS00465">
    <property type="entry name" value="POU_2"/>
    <property type="match status" value="1"/>
</dbReference>
<dbReference type="PROSITE" id="PS51179">
    <property type="entry name" value="POU_3"/>
    <property type="match status" value="1"/>
</dbReference>
<gene>
    <name type="primary">BRN3</name>
</gene>
<reference key="1">
    <citation type="journal article" date="1997" name="Brain Res. Dev. Brain Res.">
        <title>Identification of a chicken homologue in the Brn-3 subfamily of POU-transcription factors.</title>
        <authorList>
            <person name="Lindeberg J.K."/>
            <person name="Klint P."/>
            <person name="Williams R."/>
            <person name="Ebendal T."/>
        </authorList>
    </citation>
    <scope>NUCLEOTIDE SEQUENCE [GENOMIC DNA / MRNA]</scope>
    <source>
        <tissue>Spinal ganglion</tissue>
    </source>
</reference>
<accession>Q91998</accession>
<feature type="chain" id="PRO_0000100744" description="Brain-specific homeobox/POU domain protein 3">
    <location>
        <begin position="1"/>
        <end position="341"/>
    </location>
</feature>
<feature type="domain" description="POU-specific" evidence="3">
    <location>
        <begin position="182"/>
        <end position="259"/>
    </location>
</feature>
<feature type="DNA-binding region" description="Homeobox" evidence="2">
    <location>
        <begin position="277"/>
        <end position="336"/>
    </location>
</feature>
<feature type="short sequence motif" description="POU-IV box">
    <location>
        <begin position="55"/>
        <end position="65"/>
    </location>
</feature>
<organism>
    <name type="scientific">Gallus gallus</name>
    <name type="common">Chicken</name>
    <dbReference type="NCBI Taxonomy" id="9031"/>
    <lineage>
        <taxon>Eukaryota</taxon>
        <taxon>Metazoa</taxon>
        <taxon>Chordata</taxon>
        <taxon>Craniata</taxon>
        <taxon>Vertebrata</taxon>
        <taxon>Euteleostomi</taxon>
        <taxon>Archelosauria</taxon>
        <taxon>Archosauria</taxon>
        <taxon>Dinosauria</taxon>
        <taxon>Saurischia</taxon>
        <taxon>Theropoda</taxon>
        <taxon>Coelurosauria</taxon>
        <taxon>Aves</taxon>
        <taxon>Neognathae</taxon>
        <taxon>Galloanserae</taxon>
        <taxon>Galliformes</taxon>
        <taxon>Phasianidae</taxon>
        <taxon>Phasianinae</taxon>
        <taxon>Gallus</taxon>
    </lineage>
</organism>
<protein>
    <recommendedName>
        <fullName>Brain-specific homeobox/POU domain protein 3</fullName>
        <shortName>Brain-3</shortName>
        <shortName>Brn-3</shortName>
    </recommendedName>
</protein>
<comment type="function">
    <text evidence="1">May play a role in specifying terminally differentiated neuronal phenotypes.</text>
</comment>
<comment type="subcellular location">
    <subcellularLocation>
        <location>Nucleus</location>
    </subcellularLocation>
</comment>
<comment type="similarity">
    <text evidence="4">Belongs to the POU transcription factor family. Class-4 subfamily.</text>
</comment>